<feature type="chain" id="PRO_1000066184" description="Protein-methionine-sulfoxide reductase heme-binding subunit MsrQ">
    <location>
        <begin position="1"/>
        <end position="210"/>
    </location>
</feature>
<feature type="transmembrane region" description="Helical" evidence="1">
    <location>
        <begin position="8"/>
        <end position="28"/>
    </location>
</feature>
<feature type="transmembrane region" description="Helical" evidence="1">
    <location>
        <begin position="37"/>
        <end position="57"/>
    </location>
</feature>
<feature type="transmembrane region" description="Helical" evidence="1">
    <location>
        <begin position="75"/>
        <end position="95"/>
    </location>
</feature>
<feature type="transmembrane region" description="Helical" evidence="1">
    <location>
        <begin position="110"/>
        <end position="130"/>
    </location>
</feature>
<feature type="transmembrane region" description="Helical" evidence="1">
    <location>
        <begin position="147"/>
        <end position="167"/>
    </location>
</feature>
<feature type="transmembrane region" description="Helical" evidence="1">
    <location>
        <begin position="169"/>
        <end position="189"/>
    </location>
</feature>
<evidence type="ECO:0000255" key="1">
    <source>
        <dbReference type="HAMAP-Rule" id="MF_01207"/>
    </source>
</evidence>
<accession>Q4ZY63</accession>
<organism>
    <name type="scientific">Pseudomonas syringae pv. syringae (strain B728a)</name>
    <dbReference type="NCBI Taxonomy" id="205918"/>
    <lineage>
        <taxon>Bacteria</taxon>
        <taxon>Pseudomonadati</taxon>
        <taxon>Pseudomonadota</taxon>
        <taxon>Gammaproteobacteria</taxon>
        <taxon>Pseudomonadales</taxon>
        <taxon>Pseudomonadaceae</taxon>
        <taxon>Pseudomonas</taxon>
        <taxon>Pseudomonas syringae</taxon>
    </lineage>
</organism>
<proteinExistence type="inferred from homology"/>
<reference key="1">
    <citation type="journal article" date="2005" name="Proc. Natl. Acad. Sci. U.S.A.">
        <title>Comparison of the complete genome sequences of Pseudomonas syringae pv. syringae B728a and pv. tomato DC3000.</title>
        <authorList>
            <person name="Feil H."/>
            <person name="Feil W.S."/>
            <person name="Chain P."/>
            <person name="Larimer F."/>
            <person name="Dibartolo G."/>
            <person name="Copeland A."/>
            <person name="Lykidis A."/>
            <person name="Trong S."/>
            <person name="Nolan M."/>
            <person name="Goltsman E."/>
            <person name="Thiel J."/>
            <person name="Malfatti S."/>
            <person name="Loper J.E."/>
            <person name="Lapidus A."/>
            <person name="Detter J.C."/>
            <person name="Land M."/>
            <person name="Richardson P.M."/>
            <person name="Kyrpides N.C."/>
            <person name="Ivanova N."/>
            <person name="Lindow S.E."/>
        </authorList>
    </citation>
    <scope>NUCLEOTIDE SEQUENCE [LARGE SCALE GENOMIC DNA]</scope>
    <source>
        <strain>B728a</strain>
    </source>
</reference>
<comment type="function">
    <text evidence="1">Part of the MsrPQ system that repairs oxidized periplasmic proteins containing methionine sulfoxide residues (Met-O), using respiratory chain electrons. Thus protects these proteins from oxidative-stress damage caused by reactive species of oxygen and chlorine generated by the host defense mechanisms. MsrPQ is essential for the maintenance of envelope integrity under bleach stress, rescuing a wide series of structurally unrelated periplasmic proteins from methionine oxidation. MsrQ provides electrons for reduction to the reductase catalytic subunit MsrP, using the quinone pool of the respiratory chain.</text>
</comment>
<comment type="cofactor">
    <cofactor evidence="1">
        <name>FMN</name>
        <dbReference type="ChEBI" id="CHEBI:58210"/>
    </cofactor>
    <text evidence="1">Binds 1 FMN per subunit.</text>
</comment>
<comment type="cofactor">
    <cofactor evidence="1">
        <name>heme b</name>
        <dbReference type="ChEBI" id="CHEBI:60344"/>
    </cofactor>
    <text evidence="1">Binds 1 heme b (iron(II)-protoporphyrin IX) group per subunit.</text>
</comment>
<comment type="subunit">
    <text evidence="1">Heterodimer of a catalytic subunit (MsrP) and a heme-binding subunit (MsrQ).</text>
</comment>
<comment type="subcellular location">
    <subcellularLocation>
        <location evidence="1">Cell inner membrane</location>
        <topology evidence="1">Multi-pass membrane protein</topology>
    </subcellularLocation>
</comment>
<comment type="similarity">
    <text evidence="1">Belongs to the MsrQ family.</text>
</comment>
<sequence>MRYPFLRLAVFLAACIAPVWWLYQAWIFALGPDPGKVLVENFGVATLVMLLITLSMTPLQRLTGWSGWIVVRRQLGLWCFAYALLHLSMYALFILGLDWGQLGVELVKRPYIIVGALALLGLLALAVTSNRYSQRRLGARWKKLHRIIYVILGLGLLHMFWIVRADLKEWALYAGIGAFLLLLRIPVFARRIPRLGGAAKARSVKVQNNG</sequence>
<keyword id="KW-0997">Cell inner membrane</keyword>
<keyword id="KW-1003">Cell membrane</keyword>
<keyword id="KW-0249">Electron transport</keyword>
<keyword id="KW-0285">Flavoprotein</keyword>
<keyword id="KW-0288">FMN</keyword>
<keyword id="KW-0349">Heme</keyword>
<keyword id="KW-0408">Iron</keyword>
<keyword id="KW-0472">Membrane</keyword>
<keyword id="KW-0479">Metal-binding</keyword>
<keyword id="KW-0812">Transmembrane</keyword>
<keyword id="KW-1133">Transmembrane helix</keyword>
<keyword id="KW-0813">Transport</keyword>
<dbReference type="EMBL" id="CP000075">
    <property type="protein sequence ID" value="AAY35909.1"/>
    <property type="molecule type" value="Genomic_DNA"/>
</dbReference>
<dbReference type="RefSeq" id="WP_011266669.1">
    <property type="nucleotide sequence ID" value="NC_007005.1"/>
</dbReference>
<dbReference type="RefSeq" id="YP_233947.1">
    <property type="nucleotide sequence ID" value="NC_007005.1"/>
</dbReference>
<dbReference type="SMR" id="Q4ZY63"/>
<dbReference type="STRING" id="205918.Psyr_0851"/>
<dbReference type="KEGG" id="psb:Psyr_0851"/>
<dbReference type="PATRIC" id="fig|205918.7.peg.879"/>
<dbReference type="eggNOG" id="COG2717">
    <property type="taxonomic scope" value="Bacteria"/>
</dbReference>
<dbReference type="HOGENOM" id="CLU_080662_0_1_6"/>
<dbReference type="OrthoDB" id="9788328at2"/>
<dbReference type="Proteomes" id="UP000000426">
    <property type="component" value="Chromosome"/>
</dbReference>
<dbReference type="GO" id="GO:0005886">
    <property type="term" value="C:plasma membrane"/>
    <property type="evidence" value="ECO:0007669"/>
    <property type="project" value="UniProtKB-SubCell"/>
</dbReference>
<dbReference type="GO" id="GO:0009055">
    <property type="term" value="F:electron transfer activity"/>
    <property type="evidence" value="ECO:0007669"/>
    <property type="project" value="UniProtKB-UniRule"/>
</dbReference>
<dbReference type="GO" id="GO:0010181">
    <property type="term" value="F:FMN binding"/>
    <property type="evidence" value="ECO:0007669"/>
    <property type="project" value="UniProtKB-UniRule"/>
</dbReference>
<dbReference type="GO" id="GO:0020037">
    <property type="term" value="F:heme binding"/>
    <property type="evidence" value="ECO:0007669"/>
    <property type="project" value="UniProtKB-UniRule"/>
</dbReference>
<dbReference type="GO" id="GO:0046872">
    <property type="term" value="F:metal ion binding"/>
    <property type="evidence" value="ECO:0007669"/>
    <property type="project" value="UniProtKB-KW"/>
</dbReference>
<dbReference type="GO" id="GO:0016679">
    <property type="term" value="F:oxidoreductase activity, acting on diphenols and related substances as donors"/>
    <property type="evidence" value="ECO:0007669"/>
    <property type="project" value="TreeGrafter"/>
</dbReference>
<dbReference type="GO" id="GO:0030091">
    <property type="term" value="P:protein repair"/>
    <property type="evidence" value="ECO:0007669"/>
    <property type="project" value="UniProtKB-UniRule"/>
</dbReference>
<dbReference type="HAMAP" id="MF_01207">
    <property type="entry name" value="MsrQ"/>
    <property type="match status" value="1"/>
</dbReference>
<dbReference type="InterPro" id="IPR013130">
    <property type="entry name" value="Fe3_Rdtase_TM_dom"/>
</dbReference>
<dbReference type="InterPro" id="IPR022837">
    <property type="entry name" value="MsrQ-like"/>
</dbReference>
<dbReference type="NCBIfam" id="NF003831">
    <property type="entry name" value="PRK05419.1-2"/>
    <property type="match status" value="1"/>
</dbReference>
<dbReference type="PANTHER" id="PTHR36964">
    <property type="entry name" value="PROTEIN-METHIONINE-SULFOXIDE REDUCTASE HEME-BINDING SUBUNIT MSRQ"/>
    <property type="match status" value="1"/>
</dbReference>
<dbReference type="PANTHER" id="PTHR36964:SF1">
    <property type="entry name" value="PROTEIN-METHIONINE-SULFOXIDE REDUCTASE HEME-BINDING SUBUNIT MSRQ"/>
    <property type="match status" value="1"/>
</dbReference>
<dbReference type="Pfam" id="PF01794">
    <property type="entry name" value="Ferric_reduct"/>
    <property type="match status" value="1"/>
</dbReference>
<gene>
    <name evidence="1" type="primary">msrQ</name>
    <name type="ordered locus">Psyr_0851</name>
</gene>
<name>MSRQ_PSEU2</name>
<protein>
    <recommendedName>
        <fullName evidence="1">Protein-methionine-sulfoxide reductase heme-binding subunit MsrQ</fullName>
    </recommendedName>
    <alternativeName>
        <fullName evidence="1">Flavocytochrome MsrQ</fullName>
    </alternativeName>
</protein>